<dbReference type="EMBL" id="X07015">
    <property type="protein sequence ID" value="CAA30068.1"/>
    <property type="molecule type" value="Genomic_DNA"/>
</dbReference>
<dbReference type="PIR" id="S00337">
    <property type="entry name" value="S00337"/>
</dbReference>
<dbReference type="SMR" id="P05693"/>
<dbReference type="GO" id="GO:0045735">
    <property type="term" value="F:nutrient reservoir activity"/>
    <property type="evidence" value="ECO:0007669"/>
    <property type="project" value="UniProtKB-KW"/>
</dbReference>
<dbReference type="CDD" id="cd02243">
    <property type="entry name" value="cupin_11S_legumin_C"/>
    <property type="match status" value="1"/>
</dbReference>
<dbReference type="FunFam" id="2.60.120.10:FF:000073">
    <property type="entry name" value="Glycinin G1"/>
    <property type="match status" value="1"/>
</dbReference>
<dbReference type="Gene3D" id="2.60.120.10">
    <property type="entry name" value="Jelly Rolls"/>
    <property type="match status" value="2"/>
</dbReference>
<dbReference type="InterPro" id="IPR022379">
    <property type="entry name" value="11S_seedstore_CS"/>
</dbReference>
<dbReference type="InterPro" id="IPR006044">
    <property type="entry name" value="11S_seedstore_pln"/>
</dbReference>
<dbReference type="InterPro" id="IPR006045">
    <property type="entry name" value="Cupin_1"/>
</dbReference>
<dbReference type="InterPro" id="IPR014710">
    <property type="entry name" value="RmlC-like_jellyroll"/>
</dbReference>
<dbReference type="InterPro" id="IPR011051">
    <property type="entry name" value="RmlC_Cupin_sf"/>
</dbReference>
<dbReference type="InterPro" id="IPR050253">
    <property type="entry name" value="Seed_Storage-Functional"/>
</dbReference>
<dbReference type="PANTHER" id="PTHR31189:SF63">
    <property type="entry name" value="GLYCININ G5"/>
    <property type="match status" value="1"/>
</dbReference>
<dbReference type="PANTHER" id="PTHR31189">
    <property type="entry name" value="OS03G0336100 PROTEIN-RELATED"/>
    <property type="match status" value="1"/>
</dbReference>
<dbReference type="Pfam" id="PF00190">
    <property type="entry name" value="Cupin_1"/>
    <property type="match status" value="1"/>
</dbReference>
<dbReference type="PRINTS" id="PR00439">
    <property type="entry name" value="11SGLOBULIN"/>
</dbReference>
<dbReference type="SMART" id="SM00835">
    <property type="entry name" value="Cupin_1"/>
    <property type="match status" value="1"/>
</dbReference>
<dbReference type="SUPFAM" id="SSF51182">
    <property type="entry name" value="RmlC-like cupins"/>
    <property type="match status" value="1"/>
</dbReference>
<dbReference type="PROSITE" id="PS00305">
    <property type="entry name" value="11S_SEED_STORAGE"/>
    <property type="match status" value="1"/>
</dbReference>
<comment type="function">
    <text>This protein found in the seeds of many leguminous and non-leguminous plants is the source of sulfur-containing amino acids in seed meals.</text>
</comment>
<comment type="subunit">
    <text>Hexamer; each subunit is composed of an acidic and a basic chain derived from a single precursor and linked by a disulfide bond.</text>
</comment>
<comment type="similarity">
    <text evidence="3">Belongs to the 11S seed storage protein (globulins) family.</text>
</comment>
<gene>
    <name type="primary">LEGK</name>
</gene>
<evidence type="ECO:0000255" key="1"/>
<evidence type="ECO:0000256" key="2">
    <source>
        <dbReference type="SAM" id="MobiDB-lite"/>
    </source>
</evidence>
<evidence type="ECO:0000305" key="3"/>
<protein>
    <recommendedName>
        <fullName>Legumin K</fullName>
    </recommendedName>
    <component>
        <recommendedName>
            <fullName>Legumin K alpha chain</fullName>
        </recommendedName>
        <alternativeName>
            <fullName>Legumin K acidic chain</fullName>
        </alternativeName>
    </component>
    <component>
        <recommendedName>
            <fullName>Legumin K beta chain</fullName>
        </recommendedName>
        <alternativeName>
            <fullName>Legumin K basic chain</fullName>
        </alternativeName>
    </component>
</protein>
<accession>P05693</accession>
<reference key="1">
    <citation type="journal article" date="1988" name="Biochem. J.">
        <title>Two genes encoding 'minor' legumin polypeptides in pea (Pisum sativum L.). Characterization and complete sequence of the LegJ gene.</title>
        <authorList>
            <person name="Gatehouse J.A."/>
            <person name="Bown D."/>
            <person name="Gilroy J."/>
            <person name="Levasseur M."/>
            <person name="Castleton J."/>
            <person name="Ellis T.H.N."/>
        </authorList>
    </citation>
    <scope>NUCLEOTIDE SEQUENCE [GENOMIC DNA]</scope>
    <source>
        <strain>cv. Dark skinned Perfection</strain>
    </source>
</reference>
<organism>
    <name type="scientific">Pisum sativum</name>
    <name type="common">Garden pea</name>
    <name type="synonym">Lathyrus oleraceus</name>
    <dbReference type="NCBI Taxonomy" id="3888"/>
    <lineage>
        <taxon>Eukaryota</taxon>
        <taxon>Viridiplantae</taxon>
        <taxon>Streptophyta</taxon>
        <taxon>Embryophyta</taxon>
        <taxon>Tracheophyta</taxon>
        <taxon>Spermatophyta</taxon>
        <taxon>Magnoliopsida</taxon>
        <taxon>eudicotyledons</taxon>
        <taxon>Gunneridae</taxon>
        <taxon>Pentapetalae</taxon>
        <taxon>rosids</taxon>
        <taxon>fabids</taxon>
        <taxon>Fabales</taxon>
        <taxon>Fabaceae</taxon>
        <taxon>Papilionoideae</taxon>
        <taxon>50 kb inversion clade</taxon>
        <taxon>NPAAA clade</taxon>
        <taxon>Hologalegina</taxon>
        <taxon>IRL clade</taxon>
        <taxon>Fabeae</taxon>
        <taxon>Pisum</taxon>
    </lineage>
</organism>
<proteinExistence type="inferred from homology"/>
<sequence>IPYWTYNHGDEPLVAISLLDTSNIANQLDSTPRVFYLGGNPETEFPETQEEQQGRHRQKHSYPVGRRSGHHQQEEESEEQNEGNSVLSGVSSEFLAQTFNTEEDTAKRLRSPRDERSQIVRVEGGLRIINPKGKEEEEEKEQSHSHSHREEEEEEEEDEEKQRSEERKNGLEETICSAKIRENIADAAGADLYNPRAGRIRTANSLTLPVLRYLRLSAEYVRLYRNGIYAPHWNINANSLLYVIRGEGRVRIVNFQGDAVFDNKVRKGQLVVVPQNFVVAEQAGEEEGLEYVVFKTNDRAAVSHVQQVLRATPAEVLANAFGLRQRQVTELKLSGNRGPLVHPQSQSQSH</sequence>
<name>LEGK_PEA</name>
<keyword id="KW-1015">Disulfide bond</keyword>
<keyword id="KW-0708">Seed storage protein</keyword>
<keyword id="KW-0758">Storage protein</keyword>
<feature type="chain" id="PRO_0000032074" description="Legumin K alpha chain">
    <location>
        <begin position="1" status="less than"/>
        <end position="169"/>
    </location>
</feature>
<feature type="chain" id="PRO_0000032075" description="Legumin K beta chain">
    <location>
        <begin position="170"/>
        <end position="350"/>
    </location>
</feature>
<feature type="domain" description="Cupin type-1" evidence="1">
    <location>
        <begin position="182"/>
        <end position="329"/>
    </location>
</feature>
<feature type="region of interest" description="Disordered" evidence="2">
    <location>
        <begin position="37"/>
        <end position="86"/>
    </location>
</feature>
<feature type="region of interest" description="Disordered" evidence="2">
    <location>
        <begin position="102"/>
        <end position="170"/>
    </location>
</feature>
<feature type="compositionally biased region" description="Basic and acidic residues" evidence="2">
    <location>
        <begin position="104"/>
        <end position="118"/>
    </location>
</feature>
<feature type="compositionally biased region" description="Basic and acidic residues" evidence="2">
    <location>
        <begin position="141"/>
        <end position="150"/>
    </location>
</feature>
<feature type="compositionally biased region" description="Basic and acidic residues" evidence="2">
    <location>
        <begin position="160"/>
        <end position="170"/>
    </location>
</feature>
<feature type="disulfide bond" description="Interchain (between alpha and beta chains)" evidence="1">
    <location>
        <begin status="unknown"/>
        <end position="176"/>
    </location>
</feature>
<feature type="non-terminal residue">
    <location>
        <position position="1"/>
    </location>
</feature>